<protein>
    <recommendedName>
        <fullName evidence="11 15">Immunoglobulin heavy constant gamma 2</fullName>
    </recommendedName>
    <alternativeName>
        <fullName evidence="16">Ig gamma-2 chain C region</fullName>
    </alternativeName>
    <alternativeName>
        <fullName evidence="20">Ig gamma-2 chain C region DOT</fullName>
    </alternativeName>
    <alternativeName>
        <fullName evidence="19">Ig gamma-2 chain C region TIL</fullName>
    </alternativeName>
    <alternativeName>
        <fullName evidence="17 18">Ig gamma-2 chain C region ZIE</fullName>
    </alternativeName>
</protein>
<proteinExistence type="evidence at protein level"/>
<sequence>ASTKGPSVFPLAPCSRSTSESTAALGCLVKDYFPEPVTVSWNSGALTSGVHTFPAVLQSSGLYSLSSVVTVPSSNFGTQTYTCNVDHKPSNTKVDKTVERKCCVECPPCPAPPVAGPSVFLFPPKPKDTLMISRTPEVTCVVVDVSHEDPEVQFNWYVDGVEVHNAKTKPREEQFNSTFRVVSVLTVVHQDWLNGKEYKCKVSNKGLPAPIEKTISKTKGQPREPQVYTLPPSREEMTKNQVSLTCLVKGFYPSDISVEWESNGQPENNYKTTPPMLDSDGSFFLYSKLTVDKSRWQQGNVFSCSVMHEALHNHYTQKSLSLSPELQLEESCAEAQDGELDGLWTTITIFITLFLLSVCYSATITFFKVKWIFSSVVDLKQTIVPDYRNMIRQGA</sequence>
<evidence type="ECO:0000255" key="1"/>
<evidence type="ECO:0000255" key="2">
    <source>
        <dbReference type="PROSITE-ProRule" id="PRU00114"/>
    </source>
</evidence>
<evidence type="ECO:0000269" key="3">
    <source>
    </source>
</evidence>
<evidence type="ECO:0000269" key="4">
    <source>
    </source>
</evidence>
<evidence type="ECO:0000269" key="5">
    <source>
    </source>
</evidence>
<evidence type="ECO:0000269" key="6">
    <source>
    </source>
</evidence>
<evidence type="ECO:0000269" key="7">
    <source>
    </source>
</evidence>
<evidence type="ECO:0000269" key="8">
    <source>
    </source>
</evidence>
<evidence type="ECO:0000269" key="9">
    <source>
    </source>
</evidence>
<evidence type="ECO:0000269" key="10">
    <source>
    </source>
</evidence>
<evidence type="ECO:0000303" key="11">
    <source>
    </source>
</evidence>
<evidence type="ECO:0000303" key="12">
    <source>
    </source>
</evidence>
<evidence type="ECO:0000303" key="13">
    <source>
    </source>
</evidence>
<evidence type="ECO:0000303" key="14">
    <source>
    </source>
</evidence>
<evidence type="ECO:0000303" key="15">
    <source ref="14"/>
</evidence>
<evidence type="ECO:0000305" key="16"/>
<evidence type="ECO:0000305" key="17">
    <source>
    </source>
</evidence>
<evidence type="ECO:0000305" key="18">
    <source>
    </source>
</evidence>
<evidence type="ECO:0000305" key="19">
    <source>
    </source>
</evidence>
<evidence type="ECO:0000305" key="20">
    <source>
    </source>
</evidence>
<evidence type="ECO:0007829" key="21">
    <source>
        <dbReference type="PDB" id="4HAF"/>
    </source>
</evidence>
<evidence type="ECO:0007829" key="22">
    <source>
        <dbReference type="PDB" id="4L4J"/>
    </source>
</evidence>
<evidence type="ECO:0007829" key="23">
    <source>
        <dbReference type="PDB" id="7LUS"/>
    </source>
</evidence>
<reference key="1">
    <citation type="journal article" date="1982" name="Proc. Natl. Acad. Sci. U.S.A.">
        <title>Linkage and sequence homology of two human immunoglobulin gamma heavy chain constant region genes.</title>
        <authorList>
            <person name="Ellison J.W."/>
            <person name="Hood L.E."/>
        </authorList>
    </citation>
    <scope>NUCLEOTIDE SEQUENCE [GENOMIC DNA] (IMGT ALLELE IGHG2*01) (ISOFORM 1)</scope>
    <scope>VARIANT ALA-257</scope>
</reference>
<reference key="2">
    <citation type="journal article" date="2003" name="Nature">
        <title>The DNA sequence and analysis of human chromosome 14.</title>
        <authorList>
            <person name="Heilig R."/>
            <person name="Eckenberg R."/>
            <person name="Petit J.-L."/>
            <person name="Fonknechten N."/>
            <person name="Da Silva C."/>
            <person name="Cattolico L."/>
            <person name="Levy M."/>
            <person name="Barbe V."/>
            <person name="De Berardinis V."/>
            <person name="Ureta-Vidal A."/>
            <person name="Pelletier E."/>
            <person name="Vico V."/>
            <person name="Anthouard V."/>
            <person name="Rowen L."/>
            <person name="Madan A."/>
            <person name="Qin S."/>
            <person name="Sun H."/>
            <person name="Du H."/>
            <person name="Pepin K."/>
            <person name="Artiguenave F."/>
            <person name="Robert C."/>
            <person name="Cruaud C."/>
            <person name="Bruels T."/>
            <person name="Jaillon O."/>
            <person name="Friedlander L."/>
            <person name="Samson G."/>
            <person name="Brottier P."/>
            <person name="Cure S."/>
            <person name="Segurens B."/>
            <person name="Aniere F."/>
            <person name="Samain S."/>
            <person name="Crespeau H."/>
            <person name="Abbasi N."/>
            <person name="Aiach N."/>
            <person name="Boscus D."/>
            <person name="Dickhoff R."/>
            <person name="Dors M."/>
            <person name="Dubois I."/>
            <person name="Friedman C."/>
            <person name="Gouyvenoux M."/>
            <person name="James R."/>
            <person name="Madan A."/>
            <person name="Mairey-Estrada B."/>
            <person name="Mangenot S."/>
            <person name="Martins N."/>
            <person name="Menard M."/>
            <person name="Oztas S."/>
            <person name="Ratcliffe A."/>
            <person name="Shaffer T."/>
            <person name="Trask B."/>
            <person name="Vacherie B."/>
            <person name="Bellemere C."/>
            <person name="Belser C."/>
            <person name="Besnard-Gonnet M."/>
            <person name="Bartol-Mavel D."/>
            <person name="Boutard M."/>
            <person name="Briez-Silla S."/>
            <person name="Combette S."/>
            <person name="Dufosse-Laurent V."/>
            <person name="Ferron C."/>
            <person name="Lechaplais C."/>
            <person name="Louesse C."/>
            <person name="Muselet D."/>
            <person name="Magdelenat G."/>
            <person name="Pateau E."/>
            <person name="Petit E."/>
            <person name="Sirvain-Trukniewicz P."/>
            <person name="Trybou A."/>
            <person name="Vega-Czarny N."/>
            <person name="Bataille E."/>
            <person name="Bluet E."/>
            <person name="Bordelais I."/>
            <person name="Dubois M."/>
            <person name="Dumont C."/>
            <person name="Guerin T."/>
            <person name="Haffray S."/>
            <person name="Hammadi R."/>
            <person name="Muanga J."/>
            <person name="Pellouin V."/>
            <person name="Robert D."/>
            <person name="Wunderle E."/>
            <person name="Gauguet G."/>
            <person name="Roy A."/>
            <person name="Sainte-Marthe L."/>
            <person name="Verdier J."/>
            <person name="Verdier-Discala C."/>
            <person name="Hillier L.W."/>
            <person name="Fulton L."/>
            <person name="McPherson J."/>
            <person name="Matsuda F."/>
            <person name="Wilson R."/>
            <person name="Scarpelli C."/>
            <person name="Gyapay G."/>
            <person name="Wincker P."/>
            <person name="Saurin W."/>
            <person name="Quetier F."/>
            <person name="Waterston R."/>
            <person name="Hood L."/>
            <person name="Weissenbach J."/>
        </authorList>
    </citation>
    <scope>NUCLEOTIDE SEQUENCE [LARGE SCALE GENOMIC DNA] (IMGT ALLELE IGHG2*06) (ISOFORMS 1 AND 2)</scope>
</reference>
<reference key="3">
    <citation type="journal article" date="1982" name="Cell">
        <title>Structure of human immunoglobulin gamma genes: implications for evolution of a gene family.</title>
        <authorList>
            <person name="Takahashi N."/>
            <person name="Ueda S."/>
            <person name="Obata M."/>
            <person name="Nikaido T."/>
            <person name="Nakai S."/>
            <person name="Honjo T."/>
        </authorList>
    </citation>
    <scope>NUCLEOTIDE SEQUENCE [GENOMIC DNA] OF 88-115</scope>
    <source>
        <tissue>Fetal liver</tissue>
    </source>
</reference>
<reference key="4">
    <citation type="journal article" date="1982" name="EMBO J.">
        <title>Comparison of the hinge-coding segments in human immunoglobulin gamma heavy chain genes and the linkage of the gamma 2 and gamma 4 subclass genes.</title>
        <authorList>
            <person name="Krawinkel U."/>
            <person name="Rabbitts T.H."/>
        </authorList>
    </citation>
    <scope>NUCLEOTIDE SEQUENCE [GENOMIC DNA] OF 99-177 AND 310-326</scope>
    <source>
        <tissue>Fetal liver</tissue>
    </source>
</reference>
<reference key="5">
    <citation type="journal article" date="1979" name="Can. J. Biochem.">
        <title>The amino acid sequences of the three heavy chain constant region domains of a human IgG2 myeloma protein.</title>
        <authorList>
            <person name="Connell G.E."/>
            <person name="Parr D.M."/>
            <person name="Hofmann T."/>
        </authorList>
    </citation>
    <scope>PROTEIN SEQUENCE OF 1-85 AND 132-325</scope>
    <scope>VARIANT ALA-60</scope>
</reference>
<reference key="6">
    <citation type="journal article" date="1980" name="J. Immunol.">
        <title>The primary structure of a human IgG2 heavy chain: genetic, evolutionary, and functional implications.</title>
        <authorList>
            <person name="Wang A.-C."/>
            <person name="Tung E."/>
            <person name="Fudenberg H.H."/>
        </authorList>
    </citation>
    <scope>PROTEIN SEQUENCE OF 1-325</scope>
    <scope>VARIANT ALA-60</scope>
</reference>
<reference key="7">
    <citation type="journal article" date="1995" name="Eur. J. Biochem.">
        <title>Characterization of the two unique human anti-flavin monoclonal immunoglobulins.</title>
        <authorList>
            <person name="Stoppini M."/>
            <person name="Bellotti V."/>
            <person name="Negri A."/>
            <person name="Merlini G."/>
            <person name="Garver F."/>
            <person name="Ferri G."/>
        </authorList>
    </citation>
    <scope>PROTEIN SEQUENCE OF 1-121</scope>
</reference>
<reference key="8">
    <citation type="journal article" date="1979" name="Mol. Immunol.">
        <title>A note of the amino acid sequence of residues 381-391 of human immunoglobulins gamma chains.</title>
        <authorList>
            <person name="Hofmann T."/>
            <person name="Parr D.M."/>
        </authorList>
    </citation>
    <scope>PROTEIN SEQUENCE OF 238-275</scope>
</reference>
<reference key="9">
    <citation type="submission" date="1980-03" db="PIR data bank">
        <authorList>
            <person name="Hofmann T."/>
            <person name="Parr D.M."/>
        </authorList>
    </citation>
    <scope>SEQUENCE REVISION TO 25; 59; 60 AND 264-268</scope>
</reference>
<reference key="10">
    <citation type="journal article" date="1971" name="Biochem. J.">
        <title>Disulphide bridges of the heavy chain of human immunoglobulin G2.</title>
        <authorList>
            <person name="Milstein C."/>
            <person name="Frangione B."/>
        </authorList>
    </citation>
    <scope>DISULFIDE BONDS</scope>
</reference>
<reference key="11">
    <citation type="journal article" date="1969" name="Nature">
        <title>Structural studies of immunoglobulin G.</title>
        <authorList>
            <person name="Frangione B."/>
            <person name="Milstein C."/>
            <person name="Pink J.R.L."/>
        </authorList>
    </citation>
    <scope>DISULFIDE BONDS</scope>
</reference>
<reference key="12">
    <citation type="journal article" date="2001" name="EMBO J.">
        <title>EndoS, a novel secreted protein from Streptococcus pyogenes with endoglycosidase activity on human IgG.</title>
        <authorList>
            <person name="Collin M."/>
            <person name="Olsen A."/>
        </authorList>
    </citation>
    <scope>GLYCOSYLATION AT ASN-176</scope>
    <scope>DEGLYCOSYLATION (MICROBIAL INFECTION)</scope>
</reference>
<reference key="13">
    <citation type="journal article" date="2001" name="Exp. Clin. Immunogenet.">
        <title>Nomenclature of the human immunoglobulin heavy (IGH) genes.</title>
        <authorList>
            <person name="Lefranc M.P."/>
        </authorList>
    </citation>
    <scope>NOMENCLATURE</scope>
</reference>
<reference key="14">
    <citation type="book" date="2001" name="The Immunoglobulin FactsBook.">
        <title>The Immunoglobulin FactsBook.</title>
        <editorList>
            <person name="Lefranc M.P."/>
            <person name="Lefranc G."/>
        </editorList>
        <authorList>
            <person name="Lefranc M.P."/>
            <person name="Lefranc G."/>
        </authorList>
    </citation>
    <scope>NOMENCLATURE</scope>
</reference>
<reference key="15">
    <citation type="journal article" date="2004" name="Mol. Cell. Proteomics">
        <title>A proteomic analysis of human bile.</title>
        <authorList>
            <person name="Kristiansen T.Z."/>
            <person name="Bunkenborg J."/>
            <person name="Gronborg M."/>
            <person name="Molina H."/>
            <person name="Thuluvath P.J."/>
            <person name="Argani P."/>
            <person name="Goggins M.G."/>
            <person name="Maitra A."/>
            <person name="Pandey A."/>
        </authorList>
    </citation>
    <scope>GLYCOSYLATION [LARGE SCALE ANALYSIS] AT ASN-176</scope>
    <source>
        <tissue>Bile</tissue>
    </source>
</reference>
<reference key="16">
    <citation type="journal article" date="2007" name="Annu. Rev. Genet.">
        <title>Immunoglobulin somatic hypermutation.</title>
        <authorList>
            <person name="Teng G."/>
            <person name="Papavasiliou F.N."/>
        </authorList>
    </citation>
    <scope>REVIEW ON SOMATIC HYPERMUTATION</scope>
</reference>
<reference key="17">
    <citation type="journal article" date="2009" name="J. Proteome Res.">
        <title>Glycoproteomics analysis of human liver tissue by combination of multiple enzyme digestion and hydrazide chemistry.</title>
        <authorList>
            <person name="Chen R."/>
            <person name="Jiang X."/>
            <person name="Sun D."/>
            <person name="Han G."/>
            <person name="Wang F."/>
            <person name="Ye M."/>
            <person name="Wang L."/>
            <person name="Zou H."/>
        </authorList>
    </citation>
    <scope>GLYCOSYLATION [LARGE SCALE ANALYSIS] AT ASN-176</scope>
    <source>
        <tissue>Liver</tissue>
    </source>
</reference>
<reference key="18">
    <citation type="journal article" date="2009" name="Mol. Cell. Proteomics">
        <title>A strategy for precise and large scale identification of core fucosylated glycoproteins.</title>
        <authorList>
            <person name="Jia W."/>
            <person name="Lu Z."/>
            <person name="Fu Y."/>
            <person name="Wang H.P."/>
            <person name="Wang L.H."/>
            <person name="Chi H."/>
            <person name="Yuan Z.F."/>
            <person name="Zheng Z.B."/>
            <person name="Song L.N."/>
            <person name="Han H.H."/>
            <person name="Liang Y.M."/>
            <person name="Wang J.L."/>
            <person name="Cai Y."/>
            <person name="Zhang Y.K."/>
            <person name="Deng Y.L."/>
            <person name="Ying W.T."/>
            <person name="He S.M."/>
            <person name="Qian X.H."/>
        </authorList>
    </citation>
    <scope>GLYCOSYLATION AT ASN-176</scope>
</reference>
<reference key="19">
    <citation type="journal article" date="2010" name="Blood">
        <title>The IgG-specific endoglycosidase EndoS inhibits both cellular and complement-mediated autoimmune hemolysis.</title>
        <authorList>
            <person name="Allhorn M."/>
            <person name="Briceno J.G."/>
            <person name="Baudino L."/>
            <person name="Lood C."/>
            <person name="Olsson M.L."/>
            <person name="Izui S."/>
            <person name="Collin M."/>
        </authorList>
    </citation>
    <scope>GLYCOSYLATION AT ASN-176</scope>
    <scope>DEGLYCOSYLATION (MICROBIAL INFECTION)</scope>
</reference>
<reference key="20">
    <citation type="journal article" date="2010" name="J. Allergy Clin. Immunol.">
        <title>Structure and function of immunoglobulins.</title>
        <authorList>
            <person name="Schroeder H.W. Jr."/>
            <person name="Cavacini L."/>
        </authorList>
    </citation>
    <scope>REVIEW ON IMMUNOGLOBULINS</scope>
</reference>
<reference key="21">
    <citation type="journal article" date="2012" name="Nat. Rev. Immunol.">
        <title>Molecular programming of B cell memory.</title>
        <authorList>
            <person name="McHeyzer-Williams M."/>
            <person name="Okitsu S."/>
            <person name="Wang N."/>
            <person name="McHeyzer-Williams L."/>
        </authorList>
    </citation>
    <scope>REVIEW ON FUNCTION</scope>
</reference>
<reference key="22">
    <citation type="journal article" date="2013" name="Biochem. J.">
        <title>EndoS2 is a unique and conserved enzyme of serotype M49 group A Streptococcus that hydrolyses N-linked glycans on IgG and alpha1-acid glycoprotein.</title>
        <authorList>
            <person name="Sjoegren J."/>
            <person name="Struwe W.B."/>
            <person name="Cosgrave E.F."/>
            <person name="Rudd P.M."/>
            <person name="Stervander M."/>
            <person name="Allhorn M."/>
            <person name="Hollands A."/>
            <person name="Nizet V."/>
            <person name="Collin M."/>
        </authorList>
    </citation>
    <scope>DEGLYCOSYLATION (MICROBIAL INFECTION)</scope>
</reference>
<dbReference type="EMBL" id="J00230">
    <property type="protein sequence ID" value="AAB59393.1"/>
    <property type="status" value="ALT_INIT"/>
    <property type="molecule type" value="Genomic_DNA"/>
</dbReference>
<dbReference type="EMBL" id="AL928742">
    <property type="status" value="NOT_ANNOTATED_CDS"/>
    <property type="molecule type" value="Genomic_DNA"/>
</dbReference>
<dbReference type="PIR" id="A93906">
    <property type="entry name" value="G2HU"/>
</dbReference>
<dbReference type="PDB" id="2QSC">
    <property type="method" value="X-ray"/>
    <property type="resolution" value="2.80 A"/>
    <property type="chains" value="H=1-99"/>
</dbReference>
<dbReference type="PDB" id="4HAF">
    <property type="method" value="X-ray"/>
    <property type="resolution" value="2.04 A"/>
    <property type="chains" value="A/B=104-326"/>
</dbReference>
<dbReference type="PDB" id="4HAG">
    <property type="method" value="X-ray"/>
    <property type="resolution" value="3.40 A"/>
    <property type="chains" value="A=104-326"/>
</dbReference>
<dbReference type="PDB" id="4L4J">
    <property type="method" value="X-ray"/>
    <property type="resolution" value="1.92 A"/>
    <property type="chains" value="A/B=106-326"/>
</dbReference>
<dbReference type="PDB" id="7LUS">
    <property type="method" value="X-ray"/>
    <property type="resolution" value="2.45 A"/>
    <property type="chains" value="A=116-323, B=116-322"/>
</dbReference>
<dbReference type="PDBsum" id="2QSC"/>
<dbReference type="PDBsum" id="4HAF"/>
<dbReference type="PDBsum" id="4HAG"/>
<dbReference type="PDBsum" id="4L4J"/>
<dbReference type="PDBsum" id="7LUS"/>
<dbReference type="EMDB" id="EMD-12587"/>
<dbReference type="EMDB" id="EMD-20189"/>
<dbReference type="EMDB" id="EMD-21961"/>
<dbReference type="EMDB" id="EMD-23094"/>
<dbReference type="EMDB" id="EMD-23095"/>
<dbReference type="EMDB" id="EMD-23097"/>
<dbReference type="EMDB" id="EMD-23519"/>
<dbReference type="EMDB" id="EMD-24065"/>
<dbReference type="EMDB" id="EMD-26401"/>
<dbReference type="EMDB" id="EMD-26402"/>
<dbReference type="EMDB" id="EMD-26403"/>
<dbReference type="EMDB" id="EMD-26404"/>
<dbReference type="EMDB" id="EMD-27390"/>
<dbReference type="EMDB" id="EMD-27392"/>
<dbReference type="EMDB" id="EMD-41346"/>
<dbReference type="EMDB" id="EMD-41359"/>
<dbReference type="EMDB" id="EMD-41360"/>
<dbReference type="EMDB" id="EMD-41361"/>
<dbReference type="EMDB" id="EMD-41362"/>
<dbReference type="SASBDB" id="P01859"/>
<dbReference type="SMR" id="P01859"/>
<dbReference type="ComplexPortal" id="CPX-6936">
    <property type="entry name" value="IgG2 - Ig kappa immunoglobulin complex, constant regions"/>
</dbReference>
<dbReference type="ComplexPortal" id="CPX-6938">
    <property type="entry name" value="IgG2 - Ig lambda 1 immunoglobulin complex, constant regions"/>
</dbReference>
<dbReference type="ComplexPortal" id="CPX-6939">
    <property type="entry name" value="IgG2 - Ig lambda 2 immunoglobulin complex, constant regions"/>
</dbReference>
<dbReference type="ComplexPortal" id="CPX-6940">
    <property type="entry name" value="IgG2 - Ig lambda 3 immunoglobulin complex, constant regions"/>
</dbReference>
<dbReference type="ComplexPortal" id="CPX-6941">
    <property type="entry name" value="IgG2 - Ig lambda 6 immunoglobulin complex, constant regions"/>
</dbReference>
<dbReference type="ComplexPortal" id="CPX-6942">
    <property type="entry name" value="IgG2 - Ig lambda 7 immunoglobulin complex, constant regions"/>
</dbReference>
<dbReference type="FunCoup" id="P01859">
    <property type="interactions" value="389"/>
</dbReference>
<dbReference type="IntAct" id="P01859">
    <property type="interactions" value="105"/>
</dbReference>
<dbReference type="MINT" id="P01859"/>
<dbReference type="DrugBank" id="DB07329">
    <property type="generic name" value="1-[N-4'-NITROBENZYL-N-4'-CARBOXYBUTYLAMINO]METHYLPHOSPHONIC ACID"/>
</dbReference>
<dbReference type="DrugBank" id="DB08618">
    <property type="generic name" value="3-(HYDROXY-PHENYL-PHOSPHINOYLOXY)-8-METHYL-8-AZA-BICYCLO[3.2.1]OCTANE-2-CARBOXYLIC ACID METHYL ESTER"/>
</dbReference>
<dbReference type="DrugBank" id="DB08323">
    <property type="generic name" value="3-OXO-N-[(3S)-2-OXOPYRROLIDIN-3-YL]DODECANAMIDE"/>
</dbReference>
<dbReference type="DrugBank" id="DB08409">
    <property type="generic name" value="4-NITRO-BENZYLPHOSPHONOBUTANOYL-GLYCINE"/>
</dbReference>
<dbReference type="DrugBank" id="DB08510">
    <property type="generic name" value="5-ALPHA-PREGNANE-3-BETA-OL-HEMISUCCINATE"/>
</dbReference>
<dbReference type="DrugBank" id="DB02854">
    <property type="generic name" value="Aetiocholanolone"/>
</dbReference>
<dbReference type="DrugBank" id="DB07375">
    <property type="generic name" value="Etiocholanedione"/>
</dbReference>
<dbReference type="DrugBank" id="DB15258">
    <property type="generic name" value="Imlifidase"/>
</dbReference>
<dbReference type="DrugBank" id="DB04688">
    <property type="generic name" value="Methylecgonine"/>
</dbReference>
<dbReference type="DrugBank" id="DB08547">
    <property type="generic name" value="PROGESTERONE-11-ALPHA-OL-HEMISUCCINATE"/>
</dbReference>
<dbReference type="DrugCentral" id="P01859"/>
<dbReference type="IMGT_GENE-DB" id="IGHG2"/>
<dbReference type="GlyConnect" id="233">
    <property type="glycosylation" value="111 N-Linked glycans"/>
</dbReference>
<dbReference type="GlyConnect" id="2973">
    <property type="glycosylation" value="32 N-Linked glycans"/>
</dbReference>
<dbReference type="GlyConnect" id="2974">
    <property type="glycosylation" value="29 N-Linked glycans"/>
</dbReference>
<dbReference type="GlyConnect" id="688">
    <property type="glycosylation" value="103 N-Linked glycans (2 sites)"/>
</dbReference>
<dbReference type="GlyConnect" id="748">
    <property type="glycosylation" value="3 N-Linked glycans (1 site)"/>
</dbReference>
<dbReference type="GlyCosmos" id="P01859">
    <property type="glycosylation" value="1 site, 155 glycans"/>
</dbReference>
<dbReference type="GlyGen" id="P01859">
    <property type="glycosylation" value="2 sites, 134 N-linked glycans (2 sites), 1 O-linked glycan (1 site)"/>
</dbReference>
<dbReference type="iPTMnet" id="P01859"/>
<dbReference type="PhosphoSitePlus" id="P01859"/>
<dbReference type="BioMuta" id="IGHG2"/>
<dbReference type="DMDM" id="218512079"/>
<dbReference type="CPTAC" id="CPTAC-675"/>
<dbReference type="jPOST" id="P01859"/>
<dbReference type="MassIVE" id="P01859"/>
<dbReference type="PRIDE" id="P01859"/>
<dbReference type="ProteomicsDB" id="51495"/>
<dbReference type="Pumba" id="P01859"/>
<dbReference type="ABCD" id="P01859">
    <property type="antibodies" value="2 sequenced antibodies"/>
</dbReference>
<dbReference type="Ensembl" id="ENST00000390545.3">
    <molecule id="P01859-1"/>
    <property type="protein sequence ID" value="ENSP00000374987.2"/>
    <property type="gene ID" value="ENSG00000211893.4"/>
</dbReference>
<dbReference type="Ensembl" id="ENST00000621803.2">
    <molecule id="P01859-1"/>
    <property type="protein sequence ID" value="ENSP00000480351.2"/>
    <property type="gene ID" value="ENSG00000274497.2"/>
</dbReference>
<dbReference type="Ensembl" id="ENST00000641095.1">
    <molecule id="P01859-2"/>
    <property type="protein sequence ID" value="ENSP00000493129.1"/>
    <property type="gene ID" value="ENSG00000211893.4"/>
</dbReference>
<dbReference type="UCSC" id="uc059gct.1">
    <molecule id="P01859-2"/>
    <property type="organism name" value="human"/>
</dbReference>
<dbReference type="AGR" id="HGNC:5526"/>
<dbReference type="GeneCards" id="IGHG2"/>
<dbReference type="HGNC" id="HGNC:5526">
    <property type="gene designation" value="IGHG2"/>
</dbReference>
<dbReference type="HPA" id="ENSG00000211893">
    <property type="expression patterns" value="Tissue enhanced (lymphoid tissue, urinary bladder)"/>
</dbReference>
<dbReference type="MalaCards" id="IGHG2"/>
<dbReference type="MIM" id="147110">
    <property type="type" value="gene"/>
</dbReference>
<dbReference type="neXtProt" id="NX_P01859"/>
<dbReference type="OpenTargets" id="ENSG00000211893"/>
<dbReference type="Orphanet" id="183675">
    <property type="disease" value="Recurrent infections associated with rare immunoglobulin isotypes deficiency"/>
</dbReference>
<dbReference type="VEuPathDB" id="HostDB:ENSG00000211893"/>
<dbReference type="GeneTree" id="ENSGT00940000162793"/>
<dbReference type="HOGENOM" id="CLU_030625_0_2_1"/>
<dbReference type="InParanoid" id="P01859"/>
<dbReference type="OMA" id="EEMENNW"/>
<dbReference type="OrthoDB" id="8694217at2759"/>
<dbReference type="PAN-GO" id="P01859">
    <property type="GO annotations" value="11 GO annotations based on evolutionary models"/>
</dbReference>
<dbReference type="PhylomeDB" id="P01859"/>
<dbReference type="TreeFam" id="TF334176"/>
<dbReference type="PathwayCommons" id="P01859"/>
<dbReference type="Reactome" id="R-HSA-166663">
    <property type="pathway name" value="Initial triggering of complement"/>
</dbReference>
<dbReference type="Reactome" id="R-HSA-173623">
    <property type="pathway name" value="Classical antibody-mediated complement activation"/>
</dbReference>
<dbReference type="Reactome" id="R-HSA-2029481">
    <property type="pathway name" value="FCGR activation"/>
</dbReference>
<dbReference type="Reactome" id="R-HSA-2029482">
    <property type="pathway name" value="Regulation of actin dynamics for phagocytic cup formation"/>
</dbReference>
<dbReference type="Reactome" id="R-HSA-2029485">
    <property type="pathway name" value="Role of phospholipids in phagocytosis"/>
</dbReference>
<dbReference type="Reactome" id="R-HSA-9664323">
    <property type="pathway name" value="FCGR3A-mediated IL10 synthesis"/>
</dbReference>
<dbReference type="Reactome" id="R-HSA-9664422">
    <property type="pathway name" value="FCGR3A-mediated phagocytosis"/>
</dbReference>
<dbReference type="Reactome" id="R-HSA-977606">
    <property type="pathway name" value="Regulation of Complement cascade"/>
</dbReference>
<dbReference type="SignaLink" id="P01859"/>
<dbReference type="ChiTaRS" id="IGHG2">
    <property type="organism name" value="human"/>
</dbReference>
<dbReference type="EvolutionaryTrace" id="P01859"/>
<dbReference type="Pharos" id="P01859">
    <property type="development level" value="Tclin"/>
</dbReference>
<dbReference type="PRO" id="PR:P01859"/>
<dbReference type="Proteomes" id="UP000005640">
    <property type="component" value="Chromosome 14"/>
</dbReference>
<dbReference type="RNAct" id="P01859">
    <property type="molecule type" value="protein"/>
</dbReference>
<dbReference type="Bgee" id="ENSG00000211893">
    <property type="expression patterns" value="Expressed in vermiform appendix and 92 other cell types or tissues"/>
</dbReference>
<dbReference type="ExpressionAtlas" id="P01859">
    <property type="expression patterns" value="baseline and differential"/>
</dbReference>
<dbReference type="GO" id="GO:0072562">
    <property type="term" value="C:blood microparticle"/>
    <property type="evidence" value="ECO:0007005"/>
    <property type="project" value="UniProtKB"/>
</dbReference>
<dbReference type="GO" id="GO:0070062">
    <property type="term" value="C:extracellular exosome"/>
    <property type="evidence" value="ECO:0007005"/>
    <property type="project" value="UniProtKB"/>
</dbReference>
<dbReference type="GO" id="GO:0005576">
    <property type="term" value="C:extracellular region"/>
    <property type="evidence" value="ECO:0000304"/>
    <property type="project" value="Reactome"/>
</dbReference>
<dbReference type="GO" id="GO:0005615">
    <property type="term" value="C:extracellular space"/>
    <property type="evidence" value="ECO:0000314"/>
    <property type="project" value="UniProtKB"/>
</dbReference>
<dbReference type="GO" id="GO:0071735">
    <property type="term" value="C:IgG immunoglobulin complex"/>
    <property type="evidence" value="ECO:0000303"/>
    <property type="project" value="ComplexPortal"/>
</dbReference>
<dbReference type="GO" id="GO:0042571">
    <property type="term" value="C:immunoglobulin complex, circulating"/>
    <property type="evidence" value="ECO:0000318"/>
    <property type="project" value="GO_Central"/>
</dbReference>
<dbReference type="GO" id="GO:0005886">
    <property type="term" value="C:plasma membrane"/>
    <property type="evidence" value="ECO:0000303"/>
    <property type="project" value="ComplexPortal"/>
</dbReference>
<dbReference type="GO" id="GO:0003823">
    <property type="term" value="F:antigen binding"/>
    <property type="evidence" value="ECO:0000318"/>
    <property type="project" value="GO_Central"/>
</dbReference>
<dbReference type="GO" id="GO:0034987">
    <property type="term" value="F:immunoglobulin receptor binding"/>
    <property type="evidence" value="ECO:0000318"/>
    <property type="project" value="GO_Central"/>
</dbReference>
<dbReference type="GO" id="GO:0002250">
    <property type="term" value="P:adaptive immune response"/>
    <property type="evidence" value="ECO:0000303"/>
    <property type="project" value="ComplexPortal"/>
</dbReference>
<dbReference type="GO" id="GO:0019731">
    <property type="term" value="P:antibacterial humoral response"/>
    <property type="evidence" value="ECO:0000318"/>
    <property type="project" value="GO_Central"/>
</dbReference>
<dbReference type="GO" id="GO:0050853">
    <property type="term" value="P:B cell receptor signaling pathway"/>
    <property type="evidence" value="ECO:0000303"/>
    <property type="project" value="ComplexPortal"/>
</dbReference>
<dbReference type="GO" id="GO:0006958">
    <property type="term" value="P:complement activation, classical pathway"/>
    <property type="evidence" value="ECO:0000318"/>
    <property type="project" value="GO_Central"/>
</dbReference>
<dbReference type="CDD" id="cd21817">
    <property type="entry name" value="IgC1_CH1_IgEG"/>
    <property type="match status" value="1"/>
</dbReference>
<dbReference type="CDD" id="cd05768">
    <property type="entry name" value="IgC1_CH3_IgAGD_CH4_IgAEM"/>
    <property type="match status" value="1"/>
</dbReference>
<dbReference type="FunFam" id="2.60.40.10:FF:000463">
    <property type="entry name" value="Immunoglobulin heavy constant gamma 1"/>
    <property type="match status" value="1"/>
</dbReference>
<dbReference type="FunFam" id="2.60.40.10:FF:001129">
    <property type="entry name" value="Immunoglobulin heavy constant gamma 1"/>
    <property type="match status" value="1"/>
</dbReference>
<dbReference type="FunFam" id="2.60.40.10:FF:001540">
    <property type="entry name" value="Immunoglobulin heavy constant gamma 1"/>
    <property type="match status" value="1"/>
</dbReference>
<dbReference type="Gene3D" id="2.60.40.10">
    <property type="entry name" value="Immunoglobulins"/>
    <property type="match status" value="3"/>
</dbReference>
<dbReference type="InterPro" id="IPR007110">
    <property type="entry name" value="Ig-like_dom"/>
</dbReference>
<dbReference type="InterPro" id="IPR036179">
    <property type="entry name" value="Ig-like_dom_sf"/>
</dbReference>
<dbReference type="InterPro" id="IPR013783">
    <property type="entry name" value="Ig-like_fold"/>
</dbReference>
<dbReference type="InterPro" id="IPR003006">
    <property type="entry name" value="Ig/MHC_CS"/>
</dbReference>
<dbReference type="InterPro" id="IPR003597">
    <property type="entry name" value="Ig_C1-set"/>
</dbReference>
<dbReference type="InterPro" id="IPR050380">
    <property type="entry name" value="Immune_Resp_Modulators"/>
</dbReference>
<dbReference type="PANTHER" id="PTHR23411">
    <property type="entry name" value="TAPASIN"/>
    <property type="match status" value="1"/>
</dbReference>
<dbReference type="Pfam" id="PF07654">
    <property type="entry name" value="C1-set"/>
    <property type="match status" value="3"/>
</dbReference>
<dbReference type="SMART" id="SM00407">
    <property type="entry name" value="IGc1"/>
    <property type="match status" value="3"/>
</dbReference>
<dbReference type="SUPFAM" id="SSF48726">
    <property type="entry name" value="Immunoglobulin"/>
    <property type="match status" value="3"/>
</dbReference>
<dbReference type="PROSITE" id="PS50835">
    <property type="entry name" value="IG_LIKE"/>
    <property type="match status" value="3"/>
</dbReference>
<dbReference type="PROSITE" id="PS00290">
    <property type="entry name" value="IG_MHC"/>
    <property type="match status" value="2"/>
</dbReference>
<organism>
    <name type="scientific">Homo sapiens</name>
    <name type="common">Human</name>
    <dbReference type="NCBI Taxonomy" id="9606"/>
    <lineage>
        <taxon>Eukaryota</taxon>
        <taxon>Metazoa</taxon>
        <taxon>Chordata</taxon>
        <taxon>Craniata</taxon>
        <taxon>Vertebrata</taxon>
        <taxon>Euteleostomi</taxon>
        <taxon>Mammalia</taxon>
        <taxon>Eutheria</taxon>
        <taxon>Euarchontoglires</taxon>
        <taxon>Primates</taxon>
        <taxon>Haplorrhini</taxon>
        <taxon>Catarrhini</taxon>
        <taxon>Hominidae</taxon>
        <taxon>Homo</taxon>
    </lineage>
</organism>
<keyword id="KW-0002">3D-structure</keyword>
<keyword id="KW-1064">Adaptive immunity</keyword>
<keyword id="KW-0025">Alternative splicing</keyword>
<keyword id="KW-1003">Cell membrane</keyword>
<keyword id="KW-0903">Direct protein sequencing</keyword>
<keyword id="KW-1015">Disulfide bond</keyword>
<keyword id="KW-0325">Glycoprotein</keyword>
<keyword id="KW-0391">Immunity</keyword>
<keyword id="KW-1280">Immunoglobulin</keyword>
<keyword id="KW-0393">Immunoglobulin domain</keyword>
<keyword id="KW-0472">Membrane</keyword>
<keyword id="KW-1267">Proteomics identification</keyword>
<keyword id="KW-1185">Reference proteome</keyword>
<keyword id="KW-0964">Secreted</keyword>
<keyword id="KW-0812">Transmembrane</keyword>
<keyword id="KW-1133">Transmembrane helix</keyword>
<name>IGHG2_HUMAN</name>
<comment type="function">
    <text evidence="12 13 14">Constant region of immunoglobulin heavy chains. Immunoglobulins, also known as antibodies, are membrane-bound or secreted glycoproteins produced by B lymphocytes. In the recognition phase of humoral immunity, the membrane-bound immunoglobulins serve as receptors which, upon binding of a specific antigen, trigger the clonal expansion and differentiation of B lymphocytes into immunoglobulins-secreting plasma cells. Secreted immunoglobulins mediate the effector phase of humoral immunity, which results in the elimination of bound antigens (PubMed:20176268, PubMed:22158414). The antigen binding site is formed by the variable domain of one heavy chain, together with that of its associated light chain. Thus, each immunoglobulin has two antigen binding sites with remarkable affinity for a particular antigen. The variable domains are assembled by a process called V-(D)-J rearrangement and can then be subjected to somatic hypermutations which, after exposure to antigen and selection, allow affinity maturation for a particular antigen (PubMed:17576170, PubMed:20176268).</text>
</comment>
<comment type="subunit">
    <text evidence="13">Immunoglobulins are composed of two identical heavy chains and two identical light chains; disulfide-linked.</text>
</comment>
<comment type="interaction">
    <interactant intactId="EBI-1044662">
        <id>P01859</id>
    </interactant>
    <interactant intactId="EBI-8061363">
        <id>Q28109</id>
    </interactant>
    <organismsDiffer>true</organismsDiffer>
    <experiments>3</experiments>
</comment>
<comment type="subcellular location">
    <molecule>Isoform 1</molecule>
    <subcellularLocation>
        <location evidence="13 14">Secreted</location>
    </subcellularLocation>
</comment>
<comment type="subcellular location">
    <molecule>Isoform 2</molecule>
    <subcellularLocation>
        <location evidence="13 14">Cell membrane</location>
        <topology evidence="1">Single-pass membrane protein</topology>
    </subcellularLocation>
</comment>
<comment type="alternative products">
    <event type="alternative splicing"/>
    <isoform>
        <id>P01859-2</id>
        <name>2</name>
        <name>Membrane-bound</name>
        <name>mIgG2</name>
        <sequence type="displayed"/>
    </isoform>
    <isoform>
        <id>P01859-1</id>
        <name>1</name>
        <name>Secreted</name>
        <name>sIgG2</name>
        <sequence type="described" ref="VSP_061820 VSP_061821"/>
    </isoform>
</comment>
<comment type="PTM">
    <text evidence="8">Glycosylation on Asn-176 is required for interaction with Fc receptors and ability to activate the complement pathway.</text>
</comment>
<comment type="PTM">
    <text evidence="4 8 9">(Microbial infection) Deglycosylation on Asn-176 by S.pyogenes EndoS or Endos2 endoglucosidases prevents interaction between immunoglobulin-gamma (IgG) and Fc receptors, impairing ability to activate the complement pathway.</text>
</comment>
<comment type="polymorphism">
    <text evidence="16">There are several alleles. The sequence shown is that of IMGT allele IGHG2*06.</text>
</comment>
<comment type="caution">
    <text evidence="16">For an example of a full-length immunoglobulin gamma heavy chain see AC P0DOX5.</text>
</comment>
<comment type="sequence caution" evidence="16">
    <conflict type="erroneous initiation">
        <sequence resource="EMBL-CDS" id="AAB59393"/>
    </conflict>
    <text>Extended N-terminus.</text>
</comment>
<accession>P01859</accession>
<accession>A0A286YEY4</accession>
<accession>A6NE66</accession>
<gene>
    <name evidence="11 15" type="primary">IGHG2</name>
</gene>
<feature type="chain" id="PRO_0000153579" description="Immunoglobulin heavy constant gamma 2">
    <location>
        <begin position="1" status="less than"/>
        <end position="395"/>
    </location>
</feature>
<feature type="topological domain" description="Extracellular" evidence="16">
    <location>
        <begin position="1"/>
        <end position="346"/>
    </location>
</feature>
<feature type="transmembrane region" description="Helical" evidence="1">
    <location>
        <begin position="347"/>
        <end position="367"/>
    </location>
</feature>
<feature type="topological domain" description="Cytoplasmic" evidence="16">
    <location>
        <begin position="368"/>
        <end position="395"/>
    </location>
</feature>
<feature type="domain" description="Ig-like 1" evidence="2">
    <location>
        <begin position="6"/>
        <end position="99"/>
    </location>
</feature>
<feature type="domain" description="Ig-like 2" evidence="2">
    <location>
        <begin position="117"/>
        <end position="216"/>
    </location>
</feature>
<feature type="domain" description="Ig-like 3" evidence="2">
    <location>
        <begin position="225"/>
        <end position="321"/>
    </location>
</feature>
<feature type="region of interest" description="CH1">
    <location>
        <begin position="1"/>
        <end position="98"/>
    </location>
</feature>
<feature type="region of interest" description="Hinge">
    <location>
        <begin position="99"/>
        <end position="110"/>
    </location>
</feature>
<feature type="region of interest" description="CH2">
    <location>
        <begin position="111"/>
        <end position="219"/>
    </location>
</feature>
<feature type="region of interest" description="CH3">
    <location>
        <begin position="220"/>
        <end position="326"/>
    </location>
</feature>
<feature type="site" description="At or near the complement-binding site">
    <location>
        <position position="156"/>
    </location>
</feature>
<feature type="glycosylation site" description="N-linked (GlcNAc...) (complex) asparagine" evidence="4 5 6 7 8">
    <location>
        <position position="176"/>
    </location>
</feature>
<feature type="disulfide bond" description="Interchain (with a light chain)">
    <location>
        <position position="14"/>
    </location>
</feature>
<feature type="disulfide bond" evidence="2">
    <location>
        <begin position="27"/>
        <end position="83"/>
    </location>
</feature>
<feature type="disulfide bond" description="Interchain (with a heavy chain)">
    <location>
        <position position="102"/>
    </location>
</feature>
<feature type="disulfide bond" description="Interchain (with a heavy chain)">
    <location>
        <position position="103"/>
    </location>
</feature>
<feature type="disulfide bond" description="Interchain (with a heavy chain)">
    <location>
        <position position="106"/>
    </location>
</feature>
<feature type="disulfide bond" description="Interchain (with a heavy chain)">
    <location>
        <position position="109"/>
    </location>
</feature>
<feature type="disulfide bond" evidence="2">
    <location>
        <begin position="140"/>
        <end position="200"/>
    </location>
</feature>
<feature type="disulfide bond" evidence="2">
    <location>
        <begin position="246"/>
        <end position="304"/>
    </location>
</feature>
<feature type="splice variant" id="VSP_061820" description="In isoform 1.">
    <original>EL</original>
    <variation>GK</variation>
    <location>
        <begin position="325"/>
        <end position="326"/>
    </location>
</feature>
<feature type="splice variant" id="VSP_061821" description="In isoform 1.">
    <location>
        <begin position="327"/>
        <end position="395"/>
    </location>
</feature>
<feature type="sequence variant" id="VAR_003889" evidence="3 10">
    <original>S</original>
    <variation>A</variation>
    <location>
        <position position="60"/>
    </location>
</feature>
<feature type="sequence variant" id="VAR_077892" description="In IMGT allele IGHG2*01.">
    <original>S</original>
    <variation>A</variation>
    <location>
        <position position="257"/>
    </location>
</feature>
<feature type="non-terminal residue">
    <location>
        <position position="1"/>
    </location>
</feature>
<feature type="strand" evidence="22">
    <location>
        <begin position="118"/>
        <end position="122"/>
    </location>
</feature>
<feature type="helix" evidence="22">
    <location>
        <begin position="126"/>
        <end position="130"/>
    </location>
</feature>
<feature type="strand" evidence="22">
    <location>
        <begin position="137"/>
        <end position="145"/>
    </location>
</feature>
<feature type="strand" evidence="21">
    <location>
        <begin position="147"/>
        <end position="149"/>
    </location>
</feature>
<feature type="strand" evidence="22">
    <location>
        <begin position="152"/>
        <end position="158"/>
    </location>
</feature>
<feature type="strand" evidence="22">
    <location>
        <begin position="161"/>
        <end position="163"/>
    </location>
</feature>
<feature type="strand" evidence="23">
    <location>
        <begin position="167"/>
        <end position="173"/>
    </location>
</feature>
<feature type="strand" evidence="22">
    <location>
        <begin position="179"/>
        <end position="186"/>
    </location>
</feature>
<feature type="helix" evidence="22">
    <location>
        <begin position="189"/>
        <end position="193"/>
    </location>
</feature>
<feature type="strand" evidence="22">
    <location>
        <begin position="198"/>
        <end position="204"/>
    </location>
</feature>
<feature type="strand" evidence="21">
    <location>
        <begin position="207"/>
        <end position="209"/>
    </location>
</feature>
<feature type="strand" evidence="22">
    <location>
        <begin position="210"/>
        <end position="215"/>
    </location>
</feature>
<feature type="strand" evidence="22">
    <location>
        <begin position="226"/>
        <end position="230"/>
    </location>
</feature>
<feature type="helix" evidence="22">
    <location>
        <begin position="234"/>
        <end position="238"/>
    </location>
</feature>
<feature type="strand" evidence="22">
    <location>
        <begin position="239"/>
        <end position="254"/>
    </location>
</feature>
<feature type="strand" evidence="22">
    <location>
        <begin position="257"/>
        <end position="262"/>
    </location>
</feature>
<feature type="strand" evidence="22">
    <location>
        <begin position="265"/>
        <end position="267"/>
    </location>
</feature>
<feature type="strand" evidence="22">
    <location>
        <begin position="270"/>
        <end position="272"/>
    </location>
</feature>
<feature type="strand" evidence="22">
    <location>
        <begin position="283"/>
        <end position="292"/>
    </location>
</feature>
<feature type="helix" evidence="22">
    <location>
        <begin position="293"/>
        <end position="297"/>
    </location>
</feature>
<feature type="strand" evidence="22">
    <location>
        <begin position="302"/>
        <end position="307"/>
    </location>
</feature>
<feature type="helix" evidence="22">
    <location>
        <begin position="312"/>
        <end position="314"/>
    </location>
</feature>
<feature type="strand" evidence="22">
    <location>
        <begin position="316"/>
        <end position="320"/>
    </location>
</feature>